<accession>B5RCB6</accession>
<gene>
    <name evidence="1" type="primary">rhmD</name>
    <name type="ordered locus">SG2319</name>
</gene>
<sequence length="405" mass="44607">MENIMTLPKIKHVRAWFIGGATAEKGAGGGDYHDQGGNHWIDDHIATPMSKYRDYEQSRQSFGINVLGTLIVEVEAENGQTGFAVSTAGEMGCFIVEKHLNRFIEGKCVSDIKLIHDQMLGATMYYSGSGGLVMNTISCVDLALWDLFGKVVGLPVYKLLGGAVRDEIQFYATGARPDLAKEMGFIGGKMPTHWGPHDGDAGIRKDAAMVADMREKCGPDFWLMLDCWMSQDVNYATKLAHACAPFNLKWIEECLPPQQYEGYRELKRNAPAGMMVTSGEHHGTLQSFRTLAETGIDIMQPDVGWCGGLTTLVEIAALAKSRGQLVVPHGSSVYSHHAVITFTNTPFSEFLMTSPDCSTLRPQFDPILLDEPVPVNGRIHKSVLDKPGFGVELNRDCHLKRPYSH</sequence>
<name>RHMD_SALG2</name>
<comment type="function">
    <text evidence="1">Catalyzes the dehydration of L-rhamnonate to 2-keto-3-deoxy-L-rhamnonate (KDR).</text>
</comment>
<comment type="catalytic activity">
    <reaction evidence="1">
        <text>L-rhamnonate = 2-dehydro-3-deoxy-L-rhamnonate + H2O</text>
        <dbReference type="Rhea" id="RHEA:23080"/>
        <dbReference type="ChEBI" id="CHEBI:15377"/>
        <dbReference type="ChEBI" id="CHEBI:58118"/>
        <dbReference type="ChEBI" id="CHEBI:58371"/>
        <dbReference type="EC" id="4.2.1.90"/>
    </reaction>
</comment>
<comment type="cofactor">
    <cofactor evidence="1">
        <name>Mg(2+)</name>
        <dbReference type="ChEBI" id="CHEBI:18420"/>
    </cofactor>
    <text evidence="1">Binds 1 Mg(2+) ion per subunit.</text>
</comment>
<comment type="subunit">
    <text evidence="1">Homooctamer; tetramer of dimers.</text>
</comment>
<comment type="miscellaneous">
    <text evidence="1">Reaction proceeds via a syn dehydration.</text>
</comment>
<comment type="similarity">
    <text evidence="1">Belongs to the mandelate racemase/muconate lactonizing enzyme family. RhamD subfamily.</text>
</comment>
<feature type="chain" id="PRO_1000140376" description="L-rhamnonate dehydratase">
    <location>
        <begin position="1"/>
        <end position="405"/>
    </location>
</feature>
<feature type="active site" description="Proton acceptor" evidence="1">
    <location>
        <position position="329"/>
    </location>
</feature>
<feature type="binding site" evidence="1">
    <location>
        <position position="33"/>
    </location>
    <ligand>
        <name>substrate</name>
    </ligand>
</feature>
<feature type="binding site" evidence="1">
    <location>
        <position position="59"/>
    </location>
    <ligand>
        <name>substrate</name>
    </ligand>
</feature>
<feature type="binding site" evidence="1">
    <location>
        <position position="226"/>
    </location>
    <ligand>
        <name>Mg(2+)</name>
        <dbReference type="ChEBI" id="CHEBI:18420"/>
    </ligand>
</feature>
<feature type="binding site" evidence="1">
    <location>
        <position position="252"/>
    </location>
    <ligand>
        <name>Mg(2+)</name>
        <dbReference type="ChEBI" id="CHEBI:18420"/>
    </ligand>
</feature>
<feature type="binding site" evidence="1">
    <location>
        <position position="280"/>
    </location>
    <ligand>
        <name>Mg(2+)</name>
        <dbReference type="ChEBI" id="CHEBI:18420"/>
    </ligand>
</feature>
<feature type="binding site" evidence="1">
    <location>
        <position position="349"/>
    </location>
    <ligand>
        <name>substrate</name>
    </ligand>
</feature>
<feature type="site" description="Increases basicity of active site His" evidence="1">
    <location>
        <position position="302"/>
    </location>
</feature>
<feature type="site" description="Transition state stabilizer" evidence="1">
    <location>
        <position position="349"/>
    </location>
</feature>
<reference key="1">
    <citation type="journal article" date="2008" name="Genome Res.">
        <title>Comparative genome analysis of Salmonella enteritidis PT4 and Salmonella gallinarum 287/91 provides insights into evolutionary and host adaptation pathways.</title>
        <authorList>
            <person name="Thomson N.R."/>
            <person name="Clayton D.J."/>
            <person name="Windhorst D."/>
            <person name="Vernikos G."/>
            <person name="Davidson S."/>
            <person name="Churcher C."/>
            <person name="Quail M.A."/>
            <person name="Stevens M."/>
            <person name="Jones M.A."/>
            <person name="Watson M."/>
            <person name="Barron A."/>
            <person name="Layton A."/>
            <person name="Pickard D."/>
            <person name="Kingsley R.A."/>
            <person name="Bignell A."/>
            <person name="Clark L."/>
            <person name="Harris B."/>
            <person name="Ormond D."/>
            <person name="Abdellah Z."/>
            <person name="Brooks K."/>
            <person name="Cherevach I."/>
            <person name="Chillingworth T."/>
            <person name="Woodward J."/>
            <person name="Norberczak H."/>
            <person name="Lord A."/>
            <person name="Arrowsmith C."/>
            <person name="Jagels K."/>
            <person name="Moule S."/>
            <person name="Mungall K."/>
            <person name="Saunders M."/>
            <person name="Whitehead S."/>
            <person name="Chabalgoity J.A."/>
            <person name="Maskell D."/>
            <person name="Humphreys T."/>
            <person name="Roberts M."/>
            <person name="Barrow P.A."/>
            <person name="Dougan G."/>
            <person name="Parkhill J."/>
        </authorList>
    </citation>
    <scope>NUCLEOTIDE SEQUENCE [LARGE SCALE GENOMIC DNA]</scope>
    <source>
        <strain>287/91 / NCTC 13346</strain>
    </source>
</reference>
<keyword id="KW-0456">Lyase</keyword>
<keyword id="KW-0460">Magnesium</keyword>
<keyword id="KW-0479">Metal-binding</keyword>
<organism>
    <name type="scientific">Salmonella gallinarum (strain 287/91 / NCTC 13346)</name>
    <dbReference type="NCBI Taxonomy" id="550538"/>
    <lineage>
        <taxon>Bacteria</taxon>
        <taxon>Pseudomonadati</taxon>
        <taxon>Pseudomonadota</taxon>
        <taxon>Gammaproteobacteria</taxon>
        <taxon>Enterobacterales</taxon>
        <taxon>Enterobacteriaceae</taxon>
        <taxon>Salmonella</taxon>
    </lineage>
</organism>
<evidence type="ECO:0000255" key="1">
    <source>
        <dbReference type="HAMAP-Rule" id="MF_01288"/>
    </source>
</evidence>
<dbReference type="EC" id="4.2.1.90" evidence="1"/>
<dbReference type="EMBL" id="AM933173">
    <property type="protein sequence ID" value="CAR38150.1"/>
    <property type="molecule type" value="Genomic_DNA"/>
</dbReference>
<dbReference type="SMR" id="B5RCB6"/>
<dbReference type="KEGG" id="seg:SG2319"/>
<dbReference type="HOGENOM" id="CLU_030273_1_0_6"/>
<dbReference type="Proteomes" id="UP000008321">
    <property type="component" value="Chromosome"/>
</dbReference>
<dbReference type="GO" id="GO:0050032">
    <property type="term" value="F:L-rhamnonate dehydratase activity"/>
    <property type="evidence" value="ECO:0007669"/>
    <property type="project" value="UniProtKB-UniRule"/>
</dbReference>
<dbReference type="GO" id="GO:0000287">
    <property type="term" value="F:magnesium ion binding"/>
    <property type="evidence" value="ECO:0007669"/>
    <property type="project" value="UniProtKB-UniRule"/>
</dbReference>
<dbReference type="GO" id="GO:0009063">
    <property type="term" value="P:amino acid catabolic process"/>
    <property type="evidence" value="ECO:0007669"/>
    <property type="project" value="InterPro"/>
</dbReference>
<dbReference type="GO" id="GO:0016052">
    <property type="term" value="P:carbohydrate catabolic process"/>
    <property type="evidence" value="ECO:0007669"/>
    <property type="project" value="TreeGrafter"/>
</dbReference>
<dbReference type="CDD" id="cd03327">
    <property type="entry name" value="MR_like_2"/>
    <property type="match status" value="1"/>
</dbReference>
<dbReference type="FunFam" id="3.30.390.10:FF:000007">
    <property type="entry name" value="L-rhamnonate dehydratase"/>
    <property type="match status" value="1"/>
</dbReference>
<dbReference type="FunFam" id="3.20.20.120:FF:000005">
    <property type="entry name" value="Putative L-rhamnonate dehydratase"/>
    <property type="match status" value="1"/>
</dbReference>
<dbReference type="Gene3D" id="3.20.20.120">
    <property type="entry name" value="Enolase-like C-terminal domain"/>
    <property type="match status" value="1"/>
</dbReference>
<dbReference type="Gene3D" id="3.30.390.10">
    <property type="entry name" value="Enolase-like, N-terminal domain"/>
    <property type="match status" value="1"/>
</dbReference>
<dbReference type="HAMAP" id="MF_01288">
    <property type="entry name" value="Rhamnon_dehydrat"/>
    <property type="match status" value="1"/>
</dbReference>
<dbReference type="InterPro" id="IPR036849">
    <property type="entry name" value="Enolase-like_C_sf"/>
</dbReference>
<dbReference type="InterPro" id="IPR029017">
    <property type="entry name" value="Enolase-like_N"/>
</dbReference>
<dbReference type="InterPro" id="IPR029065">
    <property type="entry name" value="Enolase_C-like"/>
</dbReference>
<dbReference type="InterPro" id="IPR023444">
    <property type="entry name" value="L-Rhamnon_dehydrat"/>
</dbReference>
<dbReference type="InterPro" id="IPR018110">
    <property type="entry name" value="Mandel_Rmase/mucon_lact_enz_CS"/>
</dbReference>
<dbReference type="InterPro" id="IPR013342">
    <property type="entry name" value="Mandelate_racemase_C"/>
</dbReference>
<dbReference type="InterPro" id="IPR013341">
    <property type="entry name" value="Mandelate_racemase_N_dom"/>
</dbReference>
<dbReference type="InterPro" id="IPR046945">
    <property type="entry name" value="RHMD-like"/>
</dbReference>
<dbReference type="NCBIfam" id="NF011968">
    <property type="entry name" value="PRK15440.1"/>
    <property type="match status" value="1"/>
</dbReference>
<dbReference type="PANTHER" id="PTHR13794">
    <property type="entry name" value="ENOLASE SUPERFAMILY, MANDELATE RACEMASE"/>
    <property type="match status" value="1"/>
</dbReference>
<dbReference type="PANTHER" id="PTHR13794:SF58">
    <property type="entry name" value="MITOCHONDRIAL ENOLASE SUPERFAMILY MEMBER 1"/>
    <property type="match status" value="1"/>
</dbReference>
<dbReference type="Pfam" id="PF13378">
    <property type="entry name" value="MR_MLE_C"/>
    <property type="match status" value="1"/>
</dbReference>
<dbReference type="Pfam" id="PF02746">
    <property type="entry name" value="MR_MLE_N"/>
    <property type="match status" value="1"/>
</dbReference>
<dbReference type="SFLD" id="SFLDS00001">
    <property type="entry name" value="Enolase"/>
    <property type="match status" value="1"/>
</dbReference>
<dbReference type="SFLD" id="SFLDF00006">
    <property type="entry name" value="rhamnonate_dehydratase"/>
    <property type="match status" value="1"/>
</dbReference>
<dbReference type="SMART" id="SM00922">
    <property type="entry name" value="MR_MLE"/>
    <property type="match status" value="1"/>
</dbReference>
<dbReference type="SUPFAM" id="SSF51604">
    <property type="entry name" value="Enolase C-terminal domain-like"/>
    <property type="match status" value="1"/>
</dbReference>
<dbReference type="SUPFAM" id="SSF54826">
    <property type="entry name" value="Enolase N-terminal domain-like"/>
    <property type="match status" value="1"/>
</dbReference>
<dbReference type="PROSITE" id="PS00908">
    <property type="entry name" value="MR_MLE_1"/>
    <property type="match status" value="1"/>
</dbReference>
<proteinExistence type="inferred from homology"/>
<protein>
    <recommendedName>
        <fullName evidence="1">L-rhamnonate dehydratase</fullName>
        <shortName evidence="1">RhamD</shortName>
        <ecNumber evidence="1">4.2.1.90</ecNumber>
    </recommendedName>
</protein>